<evidence type="ECO:0000255" key="1">
    <source>
        <dbReference type="HAMAP-Rule" id="MF_00432"/>
    </source>
</evidence>
<name>PETG_PSINU</name>
<comment type="function">
    <text evidence="1">Component of the cytochrome b6-f complex, which mediates electron transfer between photosystem II (PSII) and photosystem I (PSI), cyclic electron flow around PSI, and state transitions. PetG is required for either the stability or assembly of the cytochrome b6-f complex.</text>
</comment>
<comment type="subunit">
    <text evidence="1">The 4 large subunits of the cytochrome b6-f complex are cytochrome b6, subunit IV (17 kDa polypeptide, PetD), cytochrome f and the Rieske protein, while the 4 small subunits are PetG, PetL, PetM and PetN. The complex functions as a dimer.</text>
</comment>
<comment type="subcellular location">
    <subcellularLocation>
        <location evidence="1">Plastid</location>
        <location evidence="1">Chloroplast thylakoid membrane</location>
        <topology evidence="1">Single-pass membrane protein</topology>
    </subcellularLocation>
</comment>
<comment type="similarity">
    <text evidence="1">Belongs to the PetG family.</text>
</comment>
<reference key="1">
    <citation type="journal article" date="2004" name="Mol. Biol. Evol.">
        <title>Chloroplast phylogeny indicates that bryophytes are monophyletic.</title>
        <authorList>
            <person name="Nishiyama T."/>
            <person name="Wolf P.G."/>
            <person name="Kugita M."/>
            <person name="Sinclair R.B."/>
            <person name="Sugita M."/>
            <person name="Sugiura C."/>
            <person name="Wakasugi T."/>
            <person name="Yamada K."/>
            <person name="Yoshinaga K."/>
            <person name="Yamaguchi K."/>
            <person name="Ueda K."/>
            <person name="Hasebe M."/>
        </authorList>
    </citation>
    <scope>NUCLEOTIDE SEQUENCE [LARGE SCALE GENOMIC DNA]</scope>
    <source>
        <strain>Kingyoku</strain>
    </source>
</reference>
<keyword id="KW-0150">Chloroplast</keyword>
<keyword id="KW-0249">Electron transport</keyword>
<keyword id="KW-0472">Membrane</keyword>
<keyword id="KW-0602">Photosynthesis</keyword>
<keyword id="KW-0934">Plastid</keyword>
<keyword id="KW-0793">Thylakoid</keyword>
<keyword id="KW-0812">Transmembrane</keyword>
<keyword id="KW-1133">Transmembrane helix</keyword>
<keyword id="KW-0813">Transport</keyword>
<gene>
    <name evidence="1" type="primary">petG</name>
</gene>
<feature type="chain" id="PRO_0000216401" description="Cytochrome b6-f complex subunit 5">
    <location>
        <begin position="1"/>
        <end position="37"/>
    </location>
</feature>
<feature type="transmembrane region" description="Helical" evidence="1">
    <location>
        <begin position="5"/>
        <end position="25"/>
    </location>
</feature>
<protein>
    <recommendedName>
        <fullName evidence="1">Cytochrome b6-f complex subunit 5</fullName>
    </recommendedName>
    <alternativeName>
        <fullName evidence="1">Cytochrome b6-f complex subunit PetG</fullName>
    </alternativeName>
    <alternativeName>
        <fullName evidence="1">Cytochrome b6-f complex subunit V</fullName>
    </alternativeName>
</protein>
<accession>Q8WI02</accession>
<geneLocation type="chloroplast"/>
<organism>
    <name type="scientific">Psilotum nudum</name>
    <name type="common">Whisk fern</name>
    <name type="synonym">Lycopodium nudum</name>
    <dbReference type="NCBI Taxonomy" id="3240"/>
    <lineage>
        <taxon>Eukaryota</taxon>
        <taxon>Viridiplantae</taxon>
        <taxon>Streptophyta</taxon>
        <taxon>Embryophyta</taxon>
        <taxon>Tracheophyta</taxon>
        <taxon>Polypodiopsida</taxon>
        <taxon>Ophioglossidae</taxon>
        <taxon>Psilotales</taxon>
        <taxon>Psilotaceae</taxon>
        <taxon>Psilotum</taxon>
    </lineage>
</organism>
<proteinExistence type="inferred from homology"/>
<sequence length="37" mass="3998">MVEALLSGIVLGLISITSAGLFVTAYLQYRRGDQLDL</sequence>
<dbReference type="EMBL" id="AP004638">
    <property type="protein sequence ID" value="BAB84235.1"/>
    <property type="molecule type" value="Genomic_DNA"/>
</dbReference>
<dbReference type="RefSeq" id="NP_569648.1">
    <property type="nucleotide sequence ID" value="NC_003386.1"/>
</dbReference>
<dbReference type="SMR" id="Q8WI02"/>
<dbReference type="GeneID" id="2545130"/>
<dbReference type="GO" id="GO:0009535">
    <property type="term" value="C:chloroplast thylakoid membrane"/>
    <property type="evidence" value="ECO:0007669"/>
    <property type="project" value="UniProtKB-SubCell"/>
</dbReference>
<dbReference type="GO" id="GO:0009512">
    <property type="term" value="C:cytochrome b6f complex"/>
    <property type="evidence" value="ECO:0007669"/>
    <property type="project" value="InterPro"/>
</dbReference>
<dbReference type="GO" id="GO:0045158">
    <property type="term" value="F:electron transporter, transferring electrons within cytochrome b6/f complex of photosystem II activity"/>
    <property type="evidence" value="ECO:0007669"/>
    <property type="project" value="UniProtKB-UniRule"/>
</dbReference>
<dbReference type="GO" id="GO:0017004">
    <property type="term" value="P:cytochrome complex assembly"/>
    <property type="evidence" value="ECO:0007669"/>
    <property type="project" value="UniProtKB-UniRule"/>
</dbReference>
<dbReference type="GO" id="GO:0015979">
    <property type="term" value="P:photosynthesis"/>
    <property type="evidence" value="ECO:0007669"/>
    <property type="project" value="UniProtKB-KW"/>
</dbReference>
<dbReference type="HAMAP" id="MF_00432">
    <property type="entry name" value="Cytb6_f_PetG"/>
    <property type="match status" value="1"/>
</dbReference>
<dbReference type="InterPro" id="IPR003683">
    <property type="entry name" value="Cyt_6/f_cplx_su5"/>
</dbReference>
<dbReference type="InterPro" id="IPR036099">
    <property type="entry name" value="Cyt_6/f_cplx_su5_sf"/>
</dbReference>
<dbReference type="NCBIfam" id="NF001907">
    <property type="entry name" value="PRK00665.1"/>
    <property type="match status" value="1"/>
</dbReference>
<dbReference type="Pfam" id="PF02529">
    <property type="entry name" value="PetG"/>
    <property type="match status" value="1"/>
</dbReference>
<dbReference type="PIRSF" id="PIRSF000034">
    <property type="entry name" value="Cyt_b6-f_V"/>
    <property type="match status" value="1"/>
</dbReference>
<dbReference type="SUPFAM" id="SSF103446">
    <property type="entry name" value="PetG subunit of the cytochrome b6f complex"/>
    <property type="match status" value="1"/>
</dbReference>